<accession>Q2FXB1</accession>
<proteinExistence type="evidence at protein level"/>
<gene>
    <name type="primary">lukDv</name>
    <name type="ordered locus">SAOUHSC_01954</name>
</gene>
<dbReference type="EMBL" id="CP000253">
    <property type="protein sequence ID" value="ABD31015.1"/>
    <property type="molecule type" value="Genomic_DNA"/>
</dbReference>
<dbReference type="RefSeq" id="YP_500453.1">
    <property type="nucleotide sequence ID" value="NC_007795.1"/>
</dbReference>
<dbReference type="PDB" id="6U2S">
    <property type="method" value="X-ray"/>
    <property type="resolution" value="1.50 A"/>
    <property type="chains" value="A=27-327"/>
</dbReference>
<dbReference type="PDB" id="6U33">
    <property type="method" value="X-ray"/>
    <property type="resolution" value="1.75 A"/>
    <property type="chains" value="A=27-327"/>
</dbReference>
<dbReference type="PDBsum" id="6U2S"/>
<dbReference type="PDBsum" id="6U33"/>
<dbReference type="SMR" id="Q2FXB1"/>
<dbReference type="STRING" id="93061.SAOUHSC_01954"/>
<dbReference type="PaxDb" id="1280-SAXN108_1856"/>
<dbReference type="GeneID" id="3920899"/>
<dbReference type="KEGG" id="sao:SAOUHSC_01954"/>
<dbReference type="PATRIC" id="fig|93061.5.peg.1779"/>
<dbReference type="eggNOG" id="ENOG50348U0">
    <property type="taxonomic scope" value="Bacteria"/>
</dbReference>
<dbReference type="HOGENOM" id="CLU_055394_0_1_9"/>
<dbReference type="OrthoDB" id="2413590at2"/>
<dbReference type="PRO" id="PR:Q2FXB1"/>
<dbReference type="Proteomes" id="UP000008816">
    <property type="component" value="Chromosome"/>
</dbReference>
<dbReference type="GO" id="GO:0005576">
    <property type="term" value="C:extracellular region"/>
    <property type="evidence" value="ECO:0007669"/>
    <property type="project" value="UniProtKB-SubCell"/>
</dbReference>
<dbReference type="GO" id="GO:0090729">
    <property type="term" value="F:toxin activity"/>
    <property type="evidence" value="ECO:0007669"/>
    <property type="project" value="UniProtKB-KW"/>
</dbReference>
<dbReference type="GO" id="GO:0051715">
    <property type="term" value="P:cytolysis in another organism"/>
    <property type="evidence" value="ECO:0007669"/>
    <property type="project" value="InterPro"/>
</dbReference>
<dbReference type="Gene3D" id="2.70.240.10">
    <property type="entry name" value="Leukocidin/porin MspA"/>
    <property type="match status" value="1"/>
</dbReference>
<dbReference type="InterPro" id="IPR003963">
    <property type="entry name" value="Bi-component_toxin_staph"/>
</dbReference>
<dbReference type="InterPro" id="IPR016183">
    <property type="entry name" value="Leukocidin/Hemolysin_toxin"/>
</dbReference>
<dbReference type="InterPro" id="IPR036435">
    <property type="entry name" value="Leukocidin/porin_MspA_sf"/>
</dbReference>
<dbReference type="NCBIfam" id="TIGR01002">
    <property type="entry name" value="hlyII"/>
    <property type="match status" value="1"/>
</dbReference>
<dbReference type="Pfam" id="PF07968">
    <property type="entry name" value="Leukocidin"/>
    <property type="match status" value="1"/>
</dbReference>
<dbReference type="PRINTS" id="PR01468">
    <property type="entry name" value="BICOMPNTOXIN"/>
</dbReference>
<dbReference type="SUPFAM" id="SSF56959">
    <property type="entry name" value="Leukocidin-like"/>
    <property type="match status" value="1"/>
</dbReference>
<protein>
    <recommendedName>
        <fullName>Leucotoxin LukDv</fullName>
    </recommendedName>
    <alternativeName>
        <fullName>Variant of LukD</fullName>
    </alternativeName>
</protein>
<evidence type="ECO:0000250" key="1"/>
<evidence type="ECO:0000255" key="2"/>
<evidence type="ECO:0000269" key="3">
    <source>
    </source>
</evidence>
<evidence type="ECO:0000305" key="4"/>
<evidence type="ECO:0007829" key="5">
    <source>
        <dbReference type="PDB" id="6U2S"/>
    </source>
</evidence>
<evidence type="ECO:0007829" key="6">
    <source>
        <dbReference type="PDB" id="6U33"/>
    </source>
</evidence>
<name>LUKDV_STAA8</name>
<sequence length="327" mass="36889">MKMKKLVKSSVASSIALLLLSNTVDAAQHITPVSEKKVDDKITLYKTTATSDNDKLNISQILTFNFIKDKSYDKDTLVLKAAGNINSGYKKPNPKDYNYSQFYWGGKYNVSVSSESNDAVNVVDYAPKNQNEEFQVQQTLGYSYGGDINISNGLSGGLNGSKSFSETINYKQESYRTTIDRKTNHKSIGWGVEAHKIMNNGWGPYGRDSYDPTYGNELFLGGRQSSSNAGQNFLPTHQMPLLARGNFNPEFISVLSHKQNDTKKSKIKVTYQREMDRYTNQWNRLHWVGNNYKNQNTVTFTSTYEVDWQNHTVKLIGTDSKETNPGV</sequence>
<keyword id="KW-0002">3D-structure</keyword>
<keyword id="KW-0204">Cytolysis</keyword>
<keyword id="KW-0354">Hemolysis</keyword>
<keyword id="KW-1185">Reference proteome</keyword>
<keyword id="KW-0964">Secreted</keyword>
<keyword id="KW-0732">Signal</keyword>
<keyword id="KW-0800">Toxin</keyword>
<keyword id="KW-0843">Virulence</keyword>
<comment type="function">
    <text evidence="3">Part of a bi-component leucotoxin that acts by forming pores in the membrane of the target cells. The activity of LukEv-LukDv to rabbit leukocytes is similar to that of the Panton-Valentine leucocidin (PVL). LukEv-LukDv is hemolytic to rabbit red blood cells although the activity is only 8% of gamma-hemolysin.</text>
</comment>
<comment type="subunit">
    <text evidence="1 3">Toxicity requires sequential binding and synergistic association of a class S and a class F component which form heterooligomeric complexes (By similarity). LukEv (class S) associates with LukDv (class F).</text>
</comment>
<comment type="subcellular location">
    <subcellularLocation>
        <location evidence="1">Secreted</location>
    </subcellularLocation>
</comment>
<comment type="similarity">
    <text evidence="4">Belongs to the aerolysin family.</text>
</comment>
<reference key="1">
    <citation type="book" date="2006" name="Gram positive pathogens, 2nd edition">
        <title>The Staphylococcus aureus NCTC 8325 genome.</title>
        <editorList>
            <person name="Fischetti V."/>
            <person name="Novick R."/>
            <person name="Ferretti J."/>
            <person name="Portnoy D."/>
            <person name="Rood J."/>
        </editorList>
        <authorList>
            <person name="Gillaspy A.F."/>
            <person name="Worrell V."/>
            <person name="Orvis J."/>
            <person name="Roe B.A."/>
            <person name="Dyer D.W."/>
            <person name="Iandolo J.J."/>
        </authorList>
    </citation>
    <scope>NUCLEOTIDE SEQUENCE [LARGE SCALE GENOMIC DNA]</scope>
    <source>
        <strain>NCTC 8325 / PS 47</strain>
    </source>
</reference>
<reference key="2">
    <citation type="journal article" date="2003" name="Microbiol. Immunol.">
        <title>Purification, cloning and characterization of variant LukE-LukD with strong leukocidal activity of staphylococcal bi-component leukotoxin family.</title>
        <authorList>
            <person name="Morinaga N."/>
            <person name="Kaihou Y."/>
            <person name="Noda M."/>
        </authorList>
    </citation>
    <scope>FUNCTION</scope>
    <scope>SUBUNIT</scope>
    <source>
        <strain>ATCC 27733 / V8</strain>
    </source>
</reference>
<reference key="3">
    <citation type="journal article" date="2004" name="Biosci. Biotechnol. Biochem.">
        <title>Bacterial two-component and hetero-heptameric pore-forming cytolytic toxins: structures, pore-forming mechanism, and organization of the genes.</title>
        <authorList>
            <person name="Kaneko J."/>
            <person name="Kamio Y."/>
        </authorList>
    </citation>
    <scope>SIMILARITY TO LUKDV</scope>
</reference>
<organism>
    <name type="scientific">Staphylococcus aureus (strain NCTC 8325 / PS 47)</name>
    <dbReference type="NCBI Taxonomy" id="93061"/>
    <lineage>
        <taxon>Bacteria</taxon>
        <taxon>Bacillati</taxon>
        <taxon>Bacillota</taxon>
        <taxon>Bacilli</taxon>
        <taxon>Bacillales</taxon>
        <taxon>Staphylococcaceae</taxon>
        <taxon>Staphylococcus</taxon>
    </lineage>
</organism>
<feature type="signal peptide" evidence="2">
    <location>
        <begin position="1"/>
        <end position="26"/>
    </location>
</feature>
<feature type="chain" id="PRO_0000419804" description="Leucotoxin LukDv">
    <location>
        <begin position="27"/>
        <end position="327"/>
    </location>
</feature>
<feature type="strand" evidence="5">
    <location>
        <begin position="28"/>
        <end position="30"/>
    </location>
</feature>
<feature type="strand" evidence="5">
    <location>
        <begin position="34"/>
        <end position="53"/>
    </location>
</feature>
<feature type="turn" evidence="5">
    <location>
        <begin position="54"/>
        <end position="57"/>
    </location>
</feature>
<feature type="strand" evidence="5">
    <location>
        <begin position="58"/>
        <end position="69"/>
    </location>
</feature>
<feature type="strand" evidence="5">
    <location>
        <begin position="73"/>
        <end position="86"/>
    </location>
</feature>
<feature type="strand" evidence="5">
    <location>
        <begin position="98"/>
        <end position="116"/>
    </location>
</feature>
<feature type="strand" evidence="5">
    <location>
        <begin position="120"/>
        <end position="127"/>
    </location>
</feature>
<feature type="strand" evidence="5">
    <location>
        <begin position="134"/>
        <end position="143"/>
    </location>
</feature>
<feature type="turn" evidence="5">
    <location>
        <begin position="144"/>
        <end position="146"/>
    </location>
</feature>
<feature type="strand" evidence="5">
    <location>
        <begin position="147"/>
        <end position="152"/>
    </location>
</feature>
<feature type="helix" evidence="6">
    <location>
        <begin position="155"/>
        <end position="157"/>
    </location>
</feature>
<feature type="strand" evidence="5">
    <location>
        <begin position="163"/>
        <end position="171"/>
    </location>
</feature>
<feature type="strand" evidence="5">
    <location>
        <begin position="175"/>
        <end position="179"/>
    </location>
</feature>
<feature type="strand" evidence="5">
    <location>
        <begin position="187"/>
        <end position="194"/>
    </location>
</feature>
<feature type="strand" evidence="5">
    <location>
        <begin position="197"/>
        <end position="199"/>
    </location>
</feature>
<feature type="strand" evidence="5">
    <location>
        <begin position="202"/>
        <end position="205"/>
    </location>
</feature>
<feature type="turn" evidence="5">
    <location>
        <begin position="212"/>
        <end position="214"/>
    </location>
</feature>
<feature type="helix" evidence="5">
    <location>
        <begin position="229"/>
        <end position="231"/>
    </location>
</feature>
<feature type="helix" evidence="5">
    <location>
        <begin position="236"/>
        <end position="238"/>
    </location>
</feature>
<feature type="helix" evidence="5">
    <location>
        <begin position="241"/>
        <end position="244"/>
    </location>
</feature>
<feature type="strand" evidence="5">
    <location>
        <begin position="245"/>
        <end position="247"/>
    </location>
</feature>
<feature type="strand" evidence="5">
    <location>
        <begin position="251"/>
        <end position="258"/>
    </location>
</feature>
<feature type="strand" evidence="5">
    <location>
        <begin position="265"/>
        <end position="282"/>
    </location>
</feature>
<feature type="strand" evidence="5">
    <location>
        <begin position="287"/>
        <end position="307"/>
    </location>
</feature>
<feature type="turn" evidence="5">
    <location>
        <begin position="308"/>
        <end position="311"/>
    </location>
</feature>
<feature type="strand" evidence="5">
    <location>
        <begin position="312"/>
        <end position="324"/>
    </location>
</feature>